<sequence length="56" mass="6563">MAAKGAREKIRLVSTAETGHFYTTDKNKRNMPEKMEIKKFDPVVRKHVIYKEAKIK</sequence>
<organism>
    <name type="scientific">Haemophilus influenzae (strain PittGG)</name>
    <dbReference type="NCBI Taxonomy" id="374931"/>
    <lineage>
        <taxon>Bacteria</taxon>
        <taxon>Pseudomonadati</taxon>
        <taxon>Pseudomonadota</taxon>
        <taxon>Gammaproteobacteria</taxon>
        <taxon>Pasteurellales</taxon>
        <taxon>Pasteurellaceae</taxon>
        <taxon>Haemophilus</taxon>
    </lineage>
</organism>
<comment type="similarity">
    <text evidence="1">Belongs to the bacterial ribosomal protein bL33 family.</text>
</comment>
<keyword id="KW-0687">Ribonucleoprotein</keyword>
<keyword id="KW-0689">Ribosomal protein</keyword>
<proteinExistence type="inferred from homology"/>
<protein>
    <recommendedName>
        <fullName evidence="1">Large ribosomal subunit protein bL33</fullName>
    </recommendedName>
    <alternativeName>
        <fullName evidence="2">50S ribosomal protein L33</fullName>
    </alternativeName>
</protein>
<name>RL33_HAEIG</name>
<accession>A5UI92</accession>
<feature type="chain" id="PRO_1000004172" description="Large ribosomal subunit protein bL33">
    <location>
        <begin position="1"/>
        <end position="56"/>
    </location>
</feature>
<dbReference type="EMBL" id="CP000672">
    <property type="protein sequence ID" value="ABR00498.1"/>
    <property type="molecule type" value="Genomic_DNA"/>
</dbReference>
<dbReference type="SMR" id="A5UI92"/>
<dbReference type="KEGG" id="hiq:CGSHiGG_08320"/>
<dbReference type="HOGENOM" id="CLU_190949_1_1_6"/>
<dbReference type="Proteomes" id="UP000001990">
    <property type="component" value="Chromosome"/>
</dbReference>
<dbReference type="GO" id="GO:0022625">
    <property type="term" value="C:cytosolic large ribosomal subunit"/>
    <property type="evidence" value="ECO:0007669"/>
    <property type="project" value="TreeGrafter"/>
</dbReference>
<dbReference type="GO" id="GO:0003735">
    <property type="term" value="F:structural constituent of ribosome"/>
    <property type="evidence" value="ECO:0007669"/>
    <property type="project" value="InterPro"/>
</dbReference>
<dbReference type="GO" id="GO:0006412">
    <property type="term" value="P:translation"/>
    <property type="evidence" value="ECO:0007669"/>
    <property type="project" value="UniProtKB-UniRule"/>
</dbReference>
<dbReference type="FunFam" id="2.20.28.120:FF:000001">
    <property type="entry name" value="50S ribosomal protein L33"/>
    <property type="match status" value="1"/>
</dbReference>
<dbReference type="Gene3D" id="2.20.28.120">
    <property type="entry name" value="Ribosomal protein L33"/>
    <property type="match status" value="1"/>
</dbReference>
<dbReference type="HAMAP" id="MF_00294">
    <property type="entry name" value="Ribosomal_bL33"/>
    <property type="match status" value="1"/>
</dbReference>
<dbReference type="InterPro" id="IPR001705">
    <property type="entry name" value="Ribosomal_bL33"/>
</dbReference>
<dbReference type="InterPro" id="IPR018264">
    <property type="entry name" value="Ribosomal_bL33_CS"/>
</dbReference>
<dbReference type="InterPro" id="IPR038584">
    <property type="entry name" value="Ribosomal_bL33_sf"/>
</dbReference>
<dbReference type="InterPro" id="IPR011332">
    <property type="entry name" value="Ribosomal_zn-bd"/>
</dbReference>
<dbReference type="NCBIfam" id="NF001860">
    <property type="entry name" value="PRK00595.1"/>
    <property type="match status" value="1"/>
</dbReference>
<dbReference type="NCBIfam" id="TIGR01023">
    <property type="entry name" value="rpmG_bact"/>
    <property type="match status" value="1"/>
</dbReference>
<dbReference type="PANTHER" id="PTHR15238">
    <property type="entry name" value="54S RIBOSOMAL PROTEIN L39, MITOCHONDRIAL"/>
    <property type="match status" value="1"/>
</dbReference>
<dbReference type="PANTHER" id="PTHR15238:SF1">
    <property type="entry name" value="LARGE RIBOSOMAL SUBUNIT PROTEIN BL33M"/>
    <property type="match status" value="1"/>
</dbReference>
<dbReference type="Pfam" id="PF00471">
    <property type="entry name" value="Ribosomal_L33"/>
    <property type="match status" value="1"/>
</dbReference>
<dbReference type="SUPFAM" id="SSF57829">
    <property type="entry name" value="Zn-binding ribosomal proteins"/>
    <property type="match status" value="1"/>
</dbReference>
<dbReference type="PROSITE" id="PS00582">
    <property type="entry name" value="RIBOSOMAL_L33"/>
    <property type="match status" value="1"/>
</dbReference>
<gene>
    <name evidence="1" type="primary">rpmG</name>
    <name type="ordered locus">CGSHiGG_08320</name>
</gene>
<evidence type="ECO:0000255" key="1">
    <source>
        <dbReference type="HAMAP-Rule" id="MF_00294"/>
    </source>
</evidence>
<evidence type="ECO:0000305" key="2"/>
<reference key="1">
    <citation type="journal article" date="2007" name="Genome Biol.">
        <title>Characterization and modeling of the Haemophilus influenzae core and supragenomes based on the complete genomic sequences of Rd and 12 clinical nontypeable strains.</title>
        <authorList>
            <person name="Hogg J.S."/>
            <person name="Hu F.Z."/>
            <person name="Janto B."/>
            <person name="Boissy R."/>
            <person name="Hayes J."/>
            <person name="Keefe R."/>
            <person name="Post J.C."/>
            <person name="Ehrlich G.D."/>
        </authorList>
    </citation>
    <scope>NUCLEOTIDE SEQUENCE [LARGE SCALE GENOMIC DNA]</scope>
    <source>
        <strain>PittGG</strain>
    </source>
</reference>